<accession>Q83IP6</accession>
<accession>Q7UBC7</accession>
<protein>
    <recommendedName>
        <fullName evidence="1">Chorismate pyruvate-lyase</fullName>
        <shortName evidence="1">CL</shortName>
        <shortName evidence="1">CPL</shortName>
        <ecNumber evidence="1">4.1.3.40</ecNumber>
    </recommendedName>
</protein>
<comment type="function">
    <text evidence="1">Removes the pyruvyl group from chorismate, with concomitant aromatization of the ring, to provide 4-hydroxybenzoate (4HB) for the ubiquinone pathway.</text>
</comment>
<comment type="catalytic activity">
    <reaction evidence="1">
        <text>chorismate = 4-hydroxybenzoate + pyruvate</text>
        <dbReference type="Rhea" id="RHEA:16505"/>
        <dbReference type="ChEBI" id="CHEBI:15361"/>
        <dbReference type="ChEBI" id="CHEBI:17879"/>
        <dbReference type="ChEBI" id="CHEBI:29748"/>
        <dbReference type="EC" id="4.1.3.40"/>
    </reaction>
</comment>
<comment type="pathway">
    <text evidence="1">Cofactor biosynthesis; ubiquinone biosynthesis.</text>
</comment>
<comment type="subunit">
    <text evidence="1">Monomer.</text>
</comment>
<comment type="subcellular location">
    <subcellularLocation>
        <location evidence="1">Cytoplasm</location>
    </subcellularLocation>
</comment>
<comment type="similarity">
    <text evidence="1">Belongs to the UbiC family.</text>
</comment>
<organism>
    <name type="scientific">Shigella flexneri</name>
    <dbReference type="NCBI Taxonomy" id="623"/>
    <lineage>
        <taxon>Bacteria</taxon>
        <taxon>Pseudomonadati</taxon>
        <taxon>Pseudomonadota</taxon>
        <taxon>Gammaproteobacteria</taxon>
        <taxon>Enterobacterales</taxon>
        <taxon>Enterobacteriaceae</taxon>
        <taxon>Shigella</taxon>
    </lineage>
</organism>
<proteinExistence type="inferred from homology"/>
<gene>
    <name evidence="1" type="primary">ubiC</name>
    <name type="ordered locus">SF4166</name>
    <name type="ordered locus">S3565</name>
</gene>
<evidence type="ECO:0000255" key="1">
    <source>
        <dbReference type="HAMAP-Rule" id="MF_01632"/>
    </source>
</evidence>
<feature type="chain" id="PRO_0000240575" description="Chorismate pyruvate-lyase">
    <location>
        <begin position="1"/>
        <end position="165"/>
    </location>
</feature>
<feature type="binding site" evidence="1">
    <location>
        <position position="35"/>
    </location>
    <ligand>
        <name>substrate</name>
    </ligand>
</feature>
<feature type="binding site" evidence="1">
    <location>
        <position position="77"/>
    </location>
    <ligand>
        <name>substrate</name>
    </ligand>
</feature>
<feature type="binding site" evidence="1">
    <location>
        <position position="115"/>
    </location>
    <ligand>
        <name>substrate</name>
    </ligand>
</feature>
<feature type="binding site" evidence="1">
    <location>
        <position position="156"/>
    </location>
    <ligand>
        <name>substrate</name>
    </ligand>
</feature>
<reference key="1">
    <citation type="journal article" date="2002" name="Nucleic Acids Res.">
        <title>Genome sequence of Shigella flexneri 2a: insights into pathogenicity through comparison with genomes of Escherichia coli K12 and O157.</title>
        <authorList>
            <person name="Jin Q."/>
            <person name="Yuan Z."/>
            <person name="Xu J."/>
            <person name="Wang Y."/>
            <person name="Shen Y."/>
            <person name="Lu W."/>
            <person name="Wang J."/>
            <person name="Liu H."/>
            <person name="Yang J."/>
            <person name="Yang F."/>
            <person name="Zhang X."/>
            <person name="Zhang J."/>
            <person name="Yang G."/>
            <person name="Wu H."/>
            <person name="Qu D."/>
            <person name="Dong J."/>
            <person name="Sun L."/>
            <person name="Xue Y."/>
            <person name="Zhao A."/>
            <person name="Gao Y."/>
            <person name="Zhu J."/>
            <person name="Kan B."/>
            <person name="Ding K."/>
            <person name="Chen S."/>
            <person name="Cheng H."/>
            <person name="Yao Z."/>
            <person name="He B."/>
            <person name="Chen R."/>
            <person name="Ma D."/>
            <person name="Qiang B."/>
            <person name="Wen Y."/>
            <person name="Hou Y."/>
            <person name="Yu J."/>
        </authorList>
    </citation>
    <scope>NUCLEOTIDE SEQUENCE [LARGE SCALE GENOMIC DNA]</scope>
    <source>
        <strain>301 / Serotype 2a</strain>
    </source>
</reference>
<reference key="2">
    <citation type="journal article" date="2003" name="Infect. Immun.">
        <title>Complete genome sequence and comparative genomics of Shigella flexneri serotype 2a strain 2457T.</title>
        <authorList>
            <person name="Wei J."/>
            <person name="Goldberg M.B."/>
            <person name="Burland V."/>
            <person name="Venkatesan M.M."/>
            <person name="Deng W."/>
            <person name="Fournier G."/>
            <person name="Mayhew G.F."/>
            <person name="Plunkett G. III"/>
            <person name="Rose D.J."/>
            <person name="Darling A."/>
            <person name="Mau B."/>
            <person name="Perna N.T."/>
            <person name="Payne S.M."/>
            <person name="Runyen-Janecky L.J."/>
            <person name="Zhou S."/>
            <person name="Schwartz D.C."/>
            <person name="Blattner F.R."/>
        </authorList>
    </citation>
    <scope>NUCLEOTIDE SEQUENCE [LARGE SCALE GENOMIC DNA]</scope>
    <source>
        <strain>ATCC 700930 / 2457T / Serotype 2a</strain>
    </source>
</reference>
<keyword id="KW-0963">Cytoplasm</keyword>
<keyword id="KW-0456">Lyase</keyword>
<keyword id="KW-0670">Pyruvate</keyword>
<keyword id="KW-1185">Reference proteome</keyword>
<keyword id="KW-0831">Ubiquinone biosynthesis</keyword>
<dbReference type="EC" id="4.1.3.40" evidence="1"/>
<dbReference type="EMBL" id="AE005674">
    <property type="protein sequence ID" value="AAN45588.2"/>
    <property type="molecule type" value="Genomic_DNA"/>
</dbReference>
<dbReference type="EMBL" id="AE014073">
    <property type="protein sequence ID" value="AAP18611.1"/>
    <property type="molecule type" value="Genomic_DNA"/>
</dbReference>
<dbReference type="RefSeq" id="NP_709881.2">
    <property type="nucleotide sequence ID" value="NC_004337.2"/>
</dbReference>
<dbReference type="RefSeq" id="WP_001295693.1">
    <property type="nucleotide sequence ID" value="NZ_WPGW01000150.1"/>
</dbReference>
<dbReference type="SMR" id="Q83IP6"/>
<dbReference type="STRING" id="198214.SF4166"/>
<dbReference type="PaxDb" id="198214-SF4166"/>
<dbReference type="GeneID" id="1027013"/>
<dbReference type="KEGG" id="sfl:SF4166"/>
<dbReference type="KEGG" id="sfx:S3565"/>
<dbReference type="PATRIC" id="fig|198214.7.peg.4914"/>
<dbReference type="HOGENOM" id="CLU_096824_1_0_6"/>
<dbReference type="UniPathway" id="UPA00232"/>
<dbReference type="Proteomes" id="UP000001006">
    <property type="component" value="Chromosome"/>
</dbReference>
<dbReference type="Proteomes" id="UP000002673">
    <property type="component" value="Chromosome"/>
</dbReference>
<dbReference type="GO" id="GO:0005829">
    <property type="term" value="C:cytosol"/>
    <property type="evidence" value="ECO:0007669"/>
    <property type="project" value="TreeGrafter"/>
</dbReference>
<dbReference type="GO" id="GO:0008813">
    <property type="term" value="F:chorismate lyase activity"/>
    <property type="evidence" value="ECO:0007669"/>
    <property type="project" value="UniProtKB-UniRule"/>
</dbReference>
<dbReference type="GO" id="GO:0042866">
    <property type="term" value="P:pyruvate biosynthetic process"/>
    <property type="evidence" value="ECO:0007669"/>
    <property type="project" value="UniProtKB-UniRule"/>
</dbReference>
<dbReference type="GO" id="GO:0006744">
    <property type="term" value="P:ubiquinone biosynthetic process"/>
    <property type="evidence" value="ECO:0007669"/>
    <property type="project" value="UniProtKB-UniRule"/>
</dbReference>
<dbReference type="FunFam" id="3.40.1410.10:FF:000002">
    <property type="entry name" value="Chorismate pyruvate-lyase"/>
    <property type="match status" value="1"/>
</dbReference>
<dbReference type="Gene3D" id="3.40.1410.10">
    <property type="entry name" value="Chorismate lyase-like"/>
    <property type="match status" value="1"/>
</dbReference>
<dbReference type="HAMAP" id="MF_01632">
    <property type="entry name" value="UbiC"/>
    <property type="match status" value="1"/>
</dbReference>
<dbReference type="InterPro" id="IPR007440">
    <property type="entry name" value="Chorismate--pyruvate_lyase"/>
</dbReference>
<dbReference type="InterPro" id="IPR028978">
    <property type="entry name" value="Chorismate_lyase_/UTRA_dom_sf"/>
</dbReference>
<dbReference type="NCBIfam" id="NF008656">
    <property type="entry name" value="PRK11655.1"/>
    <property type="match status" value="1"/>
</dbReference>
<dbReference type="PANTHER" id="PTHR38683">
    <property type="entry name" value="CHORISMATE PYRUVATE-LYASE"/>
    <property type="match status" value="1"/>
</dbReference>
<dbReference type="PANTHER" id="PTHR38683:SF1">
    <property type="entry name" value="CHORISMATE PYRUVATE-LYASE"/>
    <property type="match status" value="1"/>
</dbReference>
<dbReference type="Pfam" id="PF04345">
    <property type="entry name" value="Chor_lyase"/>
    <property type="match status" value="1"/>
</dbReference>
<dbReference type="SUPFAM" id="SSF64288">
    <property type="entry name" value="Chorismate lyase-like"/>
    <property type="match status" value="1"/>
</dbReference>
<name>UBIC_SHIFL</name>
<sequence length="165" mass="18821">MSHPALTQLRALRYFKEIPALDPQLLDWLLLEDSMTKRFEQQGKTVSVTMIREGFVEQNEIPEELPLLPKESRYWLREILLCADGEPWLAGRTVVPVSTLSGPELALQKLGKTPLGRYLFTSSTLTRDFIEIGRDAGLWGRRSRLRLSGKPLLLTELFLPASPLY</sequence>